<name>UBIB_GLAP5</name>
<evidence type="ECO:0000255" key="1">
    <source>
        <dbReference type="HAMAP-Rule" id="MF_00414"/>
    </source>
</evidence>
<accession>B8F6K1</accession>
<feature type="chain" id="PRO_1000134818" description="Probable protein kinase UbiB">
    <location>
        <begin position="1"/>
        <end position="549"/>
    </location>
</feature>
<feature type="transmembrane region" description="Helical" evidence="1">
    <location>
        <begin position="505"/>
        <end position="525"/>
    </location>
</feature>
<feature type="domain" description="Protein kinase" evidence="1">
    <location>
        <begin position="123"/>
        <end position="504"/>
    </location>
</feature>
<feature type="active site" description="Proton acceptor" evidence="1">
    <location>
        <position position="291"/>
    </location>
</feature>
<feature type="binding site" evidence="1">
    <location>
        <begin position="129"/>
        <end position="137"/>
    </location>
    <ligand>
        <name>ATP</name>
        <dbReference type="ChEBI" id="CHEBI:30616"/>
    </ligand>
</feature>
<feature type="binding site" evidence="1">
    <location>
        <position position="156"/>
    </location>
    <ligand>
        <name>ATP</name>
        <dbReference type="ChEBI" id="CHEBI:30616"/>
    </ligand>
</feature>
<gene>
    <name evidence="1" type="primary">ubiB</name>
    <name type="ordered locus">HAPS_1373</name>
</gene>
<organism>
    <name type="scientific">Glaesserella parasuis serovar 5 (strain SH0165)</name>
    <name type="common">Haemophilus parasuis</name>
    <dbReference type="NCBI Taxonomy" id="557723"/>
    <lineage>
        <taxon>Bacteria</taxon>
        <taxon>Pseudomonadati</taxon>
        <taxon>Pseudomonadota</taxon>
        <taxon>Gammaproteobacteria</taxon>
        <taxon>Pasteurellales</taxon>
        <taxon>Pasteurellaceae</taxon>
        <taxon>Glaesserella</taxon>
    </lineage>
</organism>
<protein>
    <recommendedName>
        <fullName evidence="1">Probable protein kinase UbiB</fullName>
        <ecNumber evidence="1">2.7.-.-</ecNumber>
    </recommendedName>
    <alternativeName>
        <fullName evidence="1">Ubiquinone biosynthesis protein UbiB</fullName>
    </alternativeName>
</protein>
<sequence length="549" mass="64187">MNIKNLRRLYNIIHTFLRYGIDEVIPDIPLTRGIRCGRKSLFWVKNQYPNEPFGVRLRLALQELGPVWIKLGQMLSTRRDLFEPELADQLALLQDSVEAFDGKLARRLIEEALGDKLEKWFDDFDETALASASIAQVHIAKFNQNQPLAGKEVVLKVLRPEIERVIKDDLALMYRLASWIPRLNKEGRRLRPVEVVREYEKTLLDELDLRKEMVNAIRLRNNFENSEMLYVPEMYQEFCHKNVIVMERIYGIPVANIDELKANGTDMKLLAERGVQVFFTQVFRDSFFHADMHPGNIFVNPNHPENPQYIGIDCGIVGTLNQNDKRYLAESFVAFFNRDYRRVALMHVESGWTPADTDIDAFEEAFREVCEPIFAKPLSEISFGHVLLNLFTVARKFNMEVQPQLVLLQKTLLYIEGLGRQVYPQLDLWQTAKPFLQDWLNEQVGFKAMWRDLKQRAPQFREHFAEFPEAMFQALQQQKQINFRLNEINQSLKAQRNNTGFSRLMILGIAIAGTFWKFEMLPLWVSVPLLVIEFRILIWCMSFSNNSYS</sequence>
<dbReference type="EC" id="2.7.-.-" evidence="1"/>
<dbReference type="EMBL" id="CP001321">
    <property type="protein sequence ID" value="ACL32953.1"/>
    <property type="molecule type" value="Genomic_DNA"/>
</dbReference>
<dbReference type="RefSeq" id="WP_015939753.1">
    <property type="nucleotide sequence ID" value="NC_011852.1"/>
</dbReference>
<dbReference type="SMR" id="B8F6K1"/>
<dbReference type="STRING" id="557723.HAPS_1373"/>
<dbReference type="KEGG" id="hap:HAPS_1373"/>
<dbReference type="PATRIC" id="fig|557723.8.peg.1347"/>
<dbReference type="HOGENOM" id="CLU_006533_0_0_6"/>
<dbReference type="UniPathway" id="UPA00232"/>
<dbReference type="Proteomes" id="UP000006743">
    <property type="component" value="Chromosome"/>
</dbReference>
<dbReference type="GO" id="GO:0005886">
    <property type="term" value="C:plasma membrane"/>
    <property type="evidence" value="ECO:0007669"/>
    <property type="project" value="UniProtKB-SubCell"/>
</dbReference>
<dbReference type="GO" id="GO:0005524">
    <property type="term" value="F:ATP binding"/>
    <property type="evidence" value="ECO:0007669"/>
    <property type="project" value="UniProtKB-KW"/>
</dbReference>
<dbReference type="GO" id="GO:0004672">
    <property type="term" value="F:protein kinase activity"/>
    <property type="evidence" value="ECO:0007669"/>
    <property type="project" value="UniProtKB-UniRule"/>
</dbReference>
<dbReference type="GO" id="GO:0010795">
    <property type="term" value="P:regulation of ubiquinone biosynthetic process"/>
    <property type="evidence" value="ECO:0007669"/>
    <property type="project" value="UniProtKB-UniRule"/>
</dbReference>
<dbReference type="GO" id="GO:0006744">
    <property type="term" value="P:ubiquinone biosynthetic process"/>
    <property type="evidence" value="ECO:0007669"/>
    <property type="project" value="UniProtKB-UniPathway"/>
</dbReference>
<dbReference type="CDD" id="cd13972">
    <property type="entry name" value="UbiB"/>
    <property type="match status" value="1"/>
</dbReference>
<dbReference type="HAMAP" id="MF_00414">
    <property type="entry name" value="UbiB"/>
    <property type="match status" value="1"/>
</dbReference>
<dbReference type="InterPro" id="IPR004147">
    <property type="entry name" value="ABC1_dom"/>
</dbReference>
<dbReference type="InterPro" id="IPR011009">
    <property type="entry name" value="Kinase-like_dom_sf"/>
</dbReference>
<dbReference type="InterPro" id="IPR010232">
    <property type="entry name" value="UbiB"/>
</dbReference>
<dbReference type="InterPro" id="IPR045308">
    <property type="entry name" value="UbiB_bact"/>
</dbReference>
<dbReference type="InterPro" id="IPR050154">
    <property type="entry name" value="UbiB_kinase"/>
</dbReference>
<dbReference type="NCBIfam" id="NF003404">
    <property type="entry name" value="PRK04750.1"/>
    <property type="match status" value="1"/>
</dbReference>
<dbReference type="NCBIfam" id="TIGR01982">
    <property type="entry name" value="UbiB"/>
    <property type="match status" value="1"/>
</dbReference>
<dbReference type="PANTHER" id="PTHR10566">
    <property type="entry name" value="CHAPERONE-ACTIVITY OF BC1 COMPLEX CABC1 -RELATED"/>
    <property type="match status" value="1"/>
</dbReference>
<dbReference type="PANTHER" id="PTHR10566:SF113">
    <property type="entry name" value="PROTEIN ACTIVITY OF BC1 COMPLEX KINASE 7, CHLOROPLASTIC"/>
    <property type="match status" value="1"/>
</dbReference>
<dbReference type="Pfam" id="PF03109">
    <property type="entry name" value="ABC1"/>
    <property type="match status" value="1"/>
</dbReference>
<dbReference type="SUPFAM" id="SSF56112">
    <property type="entry name" value="Protein kinase-like (PK-like)"/>
    <property type="match status" value="1"/>
</dbReference>
<comment type="function">
    <text evidence="1">Is probably a protein kinase regulator of UbiI activity which is involved in aerobic coenzyme Q (ubiquinone) biosynthesis.</text>
</comment>
<comment type="pathway">
    <text>Cofactor biosynthesis; ubiquinone biosynthesis [regulation].</text>
</comment>
<comment type="subcellular location">
    <subcellularLocation>
        <location evidence="1">Cell inner membrane</location>
        <topology evidence="1">Single-pass membrane protein</topology>
    </subcellularLocation>
</comment>
<comment type="similarity">
    <text evidence="1">Belongs to the ABC1 family. UbiB subfamily.</text>
</comment>
<keyword id="KW-0067">ATP-binding</keyword>
<keyword id="KW-0997">Cell inner membrane</keyword>
<keyword id="KW-1003">Cell membrane</keyword>
<keyword id="KW-0418">Kinase</keyword>
<keyword id="KW-0472">Membrane</keyword>
<keyword id="KW-0547">Nucleotide-binding</keyword>
<keyword id="KW-1185">Reference proteome</keyword>
<keyword id="KW-0808">Transferase</keyword>
<keyword id="KW-0812">Transmembrane</keyword>
<keyword id="KW-1133">Transmembrane helix</keyword>
<keyword id="KW-0831">Ubiquinone biosynthesis</keyword>
<reference key="1">
    <citation type="journal article" date="2009" name="J. Bacteriol.">
        <title>Complete genome sequence of Haemophilus parasuis SH0165.</title>
        <authorList>
            <person name="Yue M."/>
            <person name="Yang F."/>
            <person name="Yang J."/>
            <person name="Bei W."/>
            <person name="Cai X."/>
            <person name="Chen L."/>
            <person name="Dong J."/>
            <person name="Zhou R."/>
            <person name="Jin M."/>
            <person name="Jin Q."/>
            <person name="Chen H."/>
        </authorList>
    </citation>
    <scope>NUCLEOTIDE SEQUENCE [LARGE SCALE GENOMIC DNA]</scope>
    <source>
        <strain>SH0165</strain>
    </source>
</reference>
<proteinExistence type="inferred from homology"/>